<name>RPOB_AROAE</name>
<protein>
    <recommendedName>
        <fullName evidence="1">DNA-directed RNA polymerase subunit beta</fullName>
        <shortName evidence="1">RNAP subunit beta</shortName>
        <ecNumber evidence="1">2.7.7.6</ecNumber>
    </recommendedName>
    <alternativeName>
        <fullName evidence="1">RNA polymerase subunit beta</fullName>
    </alternativeName>
    <alternativeName>
        <fullName evidence="1">Transcriptase subunit beta</fullName>
    </alternativeName>
</protein>
<evidence type="ECO:0000255" key="1">
    <source>
        <dbReference type="HAMAP-Rule" id="MF_01321"/>
    </source>
</evidence>
<feature type="chain" id="PRO_0000224024" description="DNA-directed RNA polymerase subunit beta">
    <location>
        <begin position="1"/>
        <end position="1377"/>
    </location>
</feature>
<gene>
    <name evidence="1" type="primary">rpoB</name>
    <name type="ordered locus">AZOSEA21500</name>
    <name type="ORF">ebA3818</name>
</gene>
<organism>
    <name type="scientific">Aromatoleum aromaticum (strain DSM 19018 / LMG 30748 / EbN1)</name>
    <name type="common">Azoarcus sp. (strain EbN1)</name>
    <dbReference type="NCBI Taxonomy" id="76114"/>
    <lineage>
        <taxon>Bacteria</taxon>
        <taxon>Pseudomonadati</taxon>
        <taxon>Pseudomonadota</taxon>
        <taxon>Betaproteobacteria</taxon>
        <taxon>Rhodocyclales</taxon>
        <taxon>Rhodocyclaceae</taxon>
        <taxon>Aromatoleum</taxon>
    </lineage>
</organism>
<comment type="function">
    <text evidence="1">DNA-dependent RNA polymerase catalyzes the transcription of DNA into RNA using the four ribonucleoside triphosphates as substrates.</text>
</comment>
<comment type="catalytic activity">
    <reaction evidence="1">
        <text>RNA(n) + a ribonucleoside 5'-triphosphate = RNA(n+1) + diphosphate</text>
        <dbReference type="Rhea" id="RHEA:21248"/>
        <dbReference type="Rhea" id="RHEA-COMP:14527"/>
        <dbReference type="Rhea" id="RHEA-COMP:17342"/>
        <dbReference type="ChEBI" id="CHEBI:33019"/>
        <dbReference type="ChEBI" id="CHEBI:61557"/>
        <dbReference type="ChEBI" id="CHEBI:140395"/>
        <dbReference type="EC" id="2.7.7.6"/>
    </reaction>
</comment>
<comment type="subunit">
    <text evidence="1">The RNAP catalytic core consists of 2 alpha, 1 beta, 1 beta' and 1 omega subunit. When a sigma factor is associated with the core the holoenzyme is formed, which can initiate transcription.</text>
</comment>
<comment type="similarity">
    <text evidence="1">Belongs to the RNA polymerase beta chain family.</text>
</comment>
<reference key="1">
    <citation type="journal article" date="2005" name="Arch. Microbiol.">
        <title>The genome sequence of an anaerobic aromatic-degrading denitrifying bacterium, strain EbN1.</title>
        <authorList>
            <person name="Rabus R."/>
            <person name="Kube M."/>
            <person name="Heider J."/>
            <person name="Beck A."/>
            <person name="Heitmann K."/>
            <person name="Widdel F."/>
            <person name="Reinhardt R."/>
        </authorList>
    </citation>
    <scope>NUCLEOTIDE SEQUENCE [LARGE SCALE GENOMIC DNA]</scope>
    <source>
        <strain>DSM 19018 / LMG 30748 / EbN1</strain>
    </source>
</reference>
<proteinExistence type="inferred from homology"/>
<sequence>MAYSYTEKKRIRKSFAKRAAVLNVPFLLATQIESFASFLQADTPPPSRLNHGLQAAFTSIFPISSHSGNARLEFVQYMLGEPAFDVKECQQRGLTFASPLRARVRLVILDRDAPKETVKEVKEQEVYMGEIPLMTTTGSFVINGTERVIVSQLHRSPGVFFEHDRGKTHSSGKLLFSARIIPYRGSWLDFEFDPKDALYFRVDRRRKMPATILLRAIGMGPEEILATFHDFDAFHLRGNEAAFELVPDRLRGDVAKFDITDGAGNVIVARDKRITAKHIRELDQAGVKMISVPDEFLLGRIIARNIVDAETGEIVARANDEITEDLLDKLRDAGVKDLETLYVNDLDRGAYISQTLRIDETADQWAARVAIYRMMRPGEPPTEDAVEALFQGLFYSEERYDLSSVGRMKFNRRAYPEKIEDKAPSWLKRFYETVGPRGEEGPATLSNEDILAVIGVLVELRNGRGEIDDIDHLGNRRVRSVGELAENQFRAGLVRVERAVKERLSQAESDNLMPHDLINAKPISAAIKEFFGSSQLSQFMDQTNPLSEITHKRRVSALGPGGLTRERAGFEVRDVHPTHYGRVCPIETPEGPNIGLINSLAVYAQTNRHGFLETPYRKVVDSKVTDQIDFLSAIEEGQYVIAQANAEIDADGMLEGDLVSCRHKGEFALSTADQVQYMDVAPGQIVSVAASLIPFLEHDDANRALMGANMQRQAVPCLRPEKPLVGTGIERTVAVDSGTAVQAMRGGIVDYVDANRIVVRVNDDETLAGEVGVDIYNMIKYTRSNQNTNINQRPVVKVGDHIGKGDVIADGASTDLGELALGQNMLVAFMPWNGYNFEDSILISERVVAEDRFTSIHIEELTVVARDTKLGPEEITRDIASLGEAQLSRLDESGIVYIGAEVDAGDVLVGKVTPKGETQLTPEEKLLRAIFGEKASDVKDTSLRVSSGMNGTVIDVQVFTREGIERDKRAQSIIDDMLRSFKTDLADQMRIVERDAFARIRRLIVGQKANGGPKKLLKGTAITGEYLDSLEFYHWFDIRMADEELAAQLEAIREGLEKTRKDFDQAFEIKKKKLTQGDELPPGVQKMVKVYLAVKRRLQPGDKMAGRHGNKGVVSRIVPIEDMPHMADGTPVDIVLNPLGVPSRMNIGQILETHLGWASKALGNKIGTMLRANAAAAEVRELLEHIYNDNGRPEDMGSLKDDEVIELASNLSKGVPFATPVFDGAKEEEIEAMFELAGLQPGGQVTLYDGRTGDAFDRQVTVGYKHVLKLHHLVDDKMHARSTGPYSLVTQQPLGGKAQFGGQRFGEMEVWALEAYGAAYTLQEMLTVKSDDVTGRTKVYESIVKGEHKIDAGMPESFNVLVKEIRSLAIDIDLDTY</sequence>
<keyword id="KW-0240">DNA-directed RNA polymerase</keyword>
<keyword id="KW-0548">Nucleotidyltransferase</keyword>
<keyword id="KW-1185">Reference proteome</keyword>
<keyword id="KW-0804">Transcription</keyword>
<keyword id="KW-0808">Transferase</keyword>
<accession>Q5P339</accession>
<dbReference type="EC" id="2.7.7.6" evidence="1"/>
<dbReference type="EMBL" id="CR555306">
    <property type="protein sequence ID" value="CAI08275.1"/>
    <property type="molecule type" value="Genomic_DNA"/>
</dbReference>
<dbReference type="RefSeq" id="WP_011237966.1">
    <property type="nucleotide sequence ID" value="NC_006513.1"/>
</dbReference>
<dbReference type="SMR" id="Q5P339"/>
<dbReference type="STRING" id="76114.ebA3818"/>
<dbReference type="KEGG" id="eba:ebA3818"/>
<dbReference type="eggNOG" id="COG0085">
    <property type="taxonomic scope" value="Bacteria"/>
</dbReference>
<dbReference type="HOGENOM" id="CLU_000524_4_0_4"/>
<dbReference type="OrthoDB" id="9803954at2"/>
<dbReference type="Proteomes" id="UP000006552">
    <property type="component" value="Chromosome"/>
</dbReference>
<dbReference type="GO" id="GO:0000428">
    <property type="term" value="C:DNA-directed RNA polymerase complex"/>
    <property type="evidence" value="ECO:0007669"/>
    <property type="project" value="UniProtKB-KW"/>
</dbReference>
<dbReference type="GO" id="GO:0003677">
    <property type="term" value="F:DNA binding"/>
    <property type="evidence" value="ECO:0007669"/>
    <property type="project" value="UniProtKB-UniRule"/>
</dbReference>
<dbReference type="GO" id="GO:0003899">
    <property type="term" value="F:DNA-directed RNA polymerase activity"/>
    <property type="evidence" value="ECO:0007669"/>
    <property type="project" value="UniProtKB-UniRule"/>
</dbReference>
<dbReference type="GO" id="GO:0032549">
    <property type="term" value="F:ribonucleoside binding"/>
    <property type="evidence" value="ECO:0007669"/>
    <property type="project" value="InterPro"/>
</dbReference>
<dbReference type="GO" id="GO:0006351">
    <property type="term" value="P:DNA-templated transcription"/>
    <property type="evidence" value="ECO:0007669"/>
    <property type="project" value="UniProtKB-UniRule"/>
</dbReference>
<dbReference type="CDD" id="cd00653">
    <property type="entry name" value="RNA_pol_B_RPB2"/>
    <property type="match status" value="1"/>
</dbReference>
<dbReference type="FunFam" id="2.40.50.100:FF:000006">
    <property type="entry name" value="DNA-directed RNA polymerase subunit beta"/>
    <property type="match status" value="1"/>
</dbReference>
<dbReference type="FunFam" id="3.90.1800.10:FF:000001">
    <property type="entry name" value="DNA-directed RNA polymerase subunit beta"/>
    <property type="match status" value="1"/>
</dbReference>
<dbReference type="Gene3D" id="2.40.50.100">
    <property type="match status" value="1"/>
</dbReference>
<dbReference type="Gene3D" id="2.40.50.150">
    <property type="match status" value="1"/>
</dbReference>
<dbReference type="Gene3D" id="3.90.1100.10">
    <property type="match status" value="2"/>
</dbReference>
<dbReference type="Gene3D" id="2.30.150.10">
    <property type="entry name" value="DNA-directed RNA polymerase, beta subunit, external 1 domain"/>
    <property type="match status" value="1"/>
</dbReference>
<dbReference type="Gene3D" id="2.40.270.10">
    <property type="entry name" value="DNA-directed RNA polymerase, subunit 2, domain 6"/>
    <property type="match status" value="2"/>
</dbReference>
<dbReference type="Gene3D" id="3.90.1800.10">
    <property type="entry name" value="RNA polymerase alpha subunit dimerisation domain"/>
    <property type="match status" value="1"/>
</dbReference>
<dbReference type="Gene3D" id="3.90.1110.10">
    <property type="entry name" value="RNA polymerase Rpb2, domain 2"/>
    <property type="match status" value="2"/>
</dbReference>
<dbReference type="HAMAP" id="MF_01321">
    <property type="entry name" value="RNApol_bact_RpoB"/>
    <property type="match status" value="1"/>
</dbReference>
<dbReference type="InterPro" id="IPR042107">
    <property type="entry name" value="DNA-dir_RNA_pol_bsu_ext_1_sf"/>
</dbReference>
<dbReference type="InterPro" id="IPR019462">
    <property type="entry name" value="DNA-dir_RNA_pol_bsu_external_1"/>
</dbReference>
<dbReference type="InterPro" id="IPR015712">
    <property type="entry name" value="DNA-dir_RNA_pol_su2"/>
</dbReference>
<dbReference type="InterPro" id="IPR007120">
    <property type="entry name" value="DNA-dir_RNAP_su2_dom"/>
</dbReference>
<dbReference type="InterPro" id="IPR037033">
    <property type="entry name" value="DNA-dir_RNAP_su2_hyb_sf"/>
</dbReference>
<dbReference type="InterPro" id="IPR010243">
    <property type="entry name" value="RNA_pol_bsu_bac"/>
</dbReference>
<dbReference type="InterPro" id="IPR007121">
    <property type="entry name" value="RNA_pol_bsu_CS"/>
</dbReference>
<dbReference type="InterPro" id="IPR007644">
    <property type="entry name" value="RNA_pol_bsu_protrusion"/>
</dbReference>
<dbReference type="InterPro" id="IPR007642">
    <property type="entry name" value="RNA_pol_Rpb2_2"/>
</dbReference>
<dbReference type="InterPro" id="IPR037034">
    <property type="entry name" value="RNA_pol_Rpb2_2_sf"/>
</dbReference>
<dbReference type="InterPro" id="IPR007645">
    <property type="entry name" value="RNA_pol_Rpb2_3"/>
</dbReference>
<dbReference type="InterPro" id="IPR007641">
    <property type="entry name" value="RNA_pol_Rpb2_7"/>
</dbReference>
<dbReference type="InterPro" id="IPR014724">
    <property type="entry name" value="RNA_pol_RPB2_OB-fold"/>
</dbReference>
<dbReference type="NCBIfam" id="NF001616">
    <property type="entry name" value="PRK00405.1"/>
    <property type="match status" value="1"/>
</dbReference>
<dbReference type="NCBIfam" id="TIGR02013">
    <property type="entry name" value="rpoB"/>
    <property type="match status" value="1"/>
</dbReference>
<dbReference type="PANTHER" id="PTHR20856">
    <property type="entry name" value="DNA-DIRECTED RNA POLYMERASE I SUBUNIT 2"/>
    <property type="match status" value="1"/>
</dbReference>
<dbReference type="Pfam" id="PF04563">
    <property type="entry name" value="RNA_pol_Rpb2_1"/>
    <property type="match status" value="1"/>
</dbReference>
<dbReference type="Pfam" id="PF04561">
    <property type="entry name" value="RNA_pol_Rpb2_2"/>
    <property type="match status" value="2"/>
</dbReference>
<dbReference type="Pfam" id="PF04565">
    <property type="entry name" value="RNA_pol_Rpb2_3"/>
    <property type="match status" value="1"/>
</dbReference>
<dbReference type="Pfam" id="PF10385">
    <property type="entry name" value="RNA_pol_Rpb2_45"/>
    <property type="match status" value="1"/>
</dbReference>
<dbReference type="Pfam" id="PF00562">
    <property type="entry name" value="RNA_pol_Rpb2_6"/>
    <property type="match status" value="1"/>
</dbReference>
<dbReference type="Pfam" id="PF04560">
    <property type="entry name" value="RNA_pol_Rpb2_7"/>
    <property type="match status" value="1"/>
</dbReference>
<dbReference type="SUPFAM" id="SSF64484">
    <property type="entry name" value="beta and beta-prime subunits of DNA dependent RNA-polymerase"/>
    <property type="match status" value="1"/>
</dbReference>
<dbReference type="PROSITE" id="PS01166">
    <property type="entry name" value="RNA_POL_BETA"/>
    <property type="match status" value="1"/>
</dbReference>